<keyword id="KW-0687">Ribonucleoprotein</keyword>
<keyword id="KW-0689">Ribosomal protein</keyword>
<keyword id="KW-0694">RNA-binding</keyword>
<keyword id="KW-0699">rRNA-binding</keyword>
<feature type="chain" id="PRO_1000003577" description="Small ribosomal subunit protein bS18">
    <location>
        <begin position="1"/>
        <end position="76"/>
    </location>
</feature>
<reference key="1">
    <citation type="submission" date="2006-03" db="EMBL/GenBank/DDBJ databases">
        <title>Complete sequence of chromosome of Psychrobacter cryohalolentis K5.</title>
        <authorList>
            <consortium name="US DOE Joint Genome Institute"/>
            <person name="Copeland A."/>
            <person name="Lucas S."/>
            <person name="Lapidus A."/>
            <person name="Barry K."/>
            <person name="Detter J.C."/>
            <person name="Glavina T."/>
            <person name="Hammon N."/>
            <person name="Israni S."/>
            <person name="Dalin E."/>
            <person name="Tice H."/>
            <person name="Pitluck S."/>
            <person name="Brettin T."/>
            <person name="Bruce D."/>
            <person name="Han C."/>
            <person name="Tapia R."/>
            <person name="Sims D.R."/>
            <person name="Gilna P."/>
            <person name="Schmutz J."/>
            <person name="Larimer F."/>
            <person name="Land M."/>
            <person name="Hauser L."/>
            <person name="Kyrpides N."/>
            <person name="Kim E."/>
            <person name="Richardson P."/>
        </authorList>
    </citation>
    <scope>NUCLEOTIDE SEQUENCE [LARGE SCALE GENOMIC DNA]</scope>
    <source>
        <strain>ATCC BAA-1226 / DSM 17306 / VKM B-2378 / K5</strain>
    </source>
</reference>
<proteinExistence type="inferred from homology"/>
<organism>
    <name type="scientific">Psychrobacter cryohalolentis (strain ATCC BAA-1226 / DSM 17306 / VKM B-2378 / K5)</name>
    <dbReference type="NCBI Taxonomy" id="335284"/>
    <lineage>
        <taxon>Bacteria</taxon>
        <taxon>Pseudomonadati</taxon>
        <taxon>Pseudomonadota</taxon>
        <taxon>Gammaproteobacteria</taxon>
        <taxon>Moraxellales</taxon>
        <taxon>Moraxellaceae</taxon>
        <taxon>Psychrobacter</taxon>
    </lineage>
</organism>
<protein>
    <recommendedName>
        <fullName evidence="1">Small ribosomal subunit protein bS18</fullName>
    </recommendedName>
    <alternativeName>
        <fullName evidence="2">30S ribosomal protein S18</fullName>
    </alternativeName>
</protein>
<comment type="function">
    <text evidence="1">Binds as a heterodimer with protein bS6 to the central domain of the 16S rRNA, where it helps stabilize the platform of the 30S subunit.</text>
</comment>
<comment type="subunit">
    <text evidence="1">Part of the 30S ribosomal subunit. Forms a tight heterodimer with protein bS6.</text>
</comment>
<comment type="similarity">
    <text evidence="1">Belongs to the bacterial ribosomal protein bS18 family.</text>
</comment>
<dbReference type="EMBL" id="CP000323">
    <property type="protein sequence ID" value="ABE74812.1"/>
    <property type="molecule type" value="Genomic_DNA"/>
</dbReference>
<dbReference type="RefSeq" id="WP_010198808.1">
    <property type="nucleotide sequence ID" value="NC_007969.1"/>
</dbReference>
<dbReference type="SMR" id="Q1QBZ1"/>
<dbReference type="STRING" id="335284.Pcryo_1031"/>
<dbReference type="GeneID" id="60254523"/>
<dbReference type="KEGG" id="pcr:Pcryo_1031"/>
<dbReference type="eggNOG" id="COG0238">
    <property type="taxonomic scope" value="Bacteria"/>
</dbReference>
<dbReference type="HOGENOM" id="CLU_148710_2_3_6"/>
<dbReference type="Proteomes" id="UP000002425">
    <property type="component" value="Chromosome"/>
</dbReference>
<dbReference type="GO" id="GO:0022627">
    <property type="term" value="C:cytosolic small ribosomal subunit"/>
    <property type="evidence" value="ECO:0007669"/>
    <property type="project" value="TreeGrafter"/>
</dbReference>
<dbReference type="GO" id="GO:0070181">
    <property type="term" value="F:small ribosomal subunit rRNA binding"/>
    <property type="evidence" value="ECO:0007669"/>
    <property type="project" value="TreeGrafter"/>
</dbReference>
<dbReference type="GO" id="GO:0003735">
    <property type="term" value="F:structural constituent of ribosome"/>
    <property type="evidence" value="ECO:0007669"/>
    <property type="project" value="InterPro"/>
</dbReference>
<dbReference type="GO" id="GO:0006412">
    <property type="term" value="P:translation"/>
    <property type="evidence" value="ECO:0007669"/>
    <property type="project" value="UniProtKB-UniRule"/>
</dbReference>
<dbReference type="FunFam" id="4.10.640.10:FF:000001">
    <property type="entry name" value="30S ribosomal protein S18"/>
    <property type="match status" value="1"/>
</dbReference>
<dbReference type="Gene3D" id="4.10.640.10">
    <property type="entry name" value="Ribosomal protein S18"/>
    <property type="match status" value="1"/>
</dbReference>
<dbReference type="HAMAP" id="MF_00270">
    <property type="entry name" value="Ribosomal_bS18"/>
    <property type="match status" value="1"/>
</dbReference>
<dbReference type="InterPro" id="IPR001648">
    <property type="entry name" value="Ribosomal_bS18"/>
</dbReference>
<dbReference type="InterPro" id="IPR018275">
    <property type="entry name" value="Ribosomal_bS18_CS"/>
</dbReference>
<dbReference type="InterPro" id="IPR036870">
    <property type="entry name" value="Ribosomal_bS18_sf"/>
</dbReference>
<dbReference type="NCBIfam" id="TIGR00165">
    <property type="entry name" value="S18"/>
    <property type="match status" value="1"/>
</dbReference>
<dbReference type="PANTHER" id="PTHR13479">
    <property type="entry name" value="30S RIBOSOMAL PROTEIN S18"/>
    <property type="match status" value="1"/>
</dbReference>
<dbReference type="PANTHER" id="PTHR13479:SF40">
    <property type="entry name" value="SMALL RIBOSOMAL SUBUNIT PROTEIN BS18M"/>
    <property type="match status" value="1"/>
</dbReference>
<dbReference type="Pfam" id="PF01084">
    <property type="entry name" value="Ribosomal_S18"/>
    <property type="match status" value="1"/>
</dbReference>
<dbReference type="PRINTS" id="PR00974">
    <property type="entry name" value="RIBOSOMALS18"/>
</dbReference>
<dbReference type="SUPFAM" id="SSF46911">
    <property type="entry name" value="Ribosomal protein S18"/>
    <property type="match status" value="1"/>
</dbReference>
<dbReference type="PROSITE" id="PS00057">
    <property type="entry name" value="RIBOSOMAL_S18"/>
    <property type="match status" value="1"/>
</dbReference>
<gene>
    <name evidence="1" type="primary">rpsR</name>
    <name type="ordered locus">Pcryo_1031</name>
</gene>
<sequence>MARFYRRRKFCRFTAEGITHIDYKDVELLKQYISDNGKIVPSRITGTSTKYQRQLATAIKQARYLSLLPYTDNHQG</sequence>
<evidence type="ECO:0000255" key="1">
    <source>
        <dbReference type="HAMAP-Rule" id="MF_00270"/>
    </source>
</evidence>
<evidence type="ECO:0000305" key="2"/>
<name>RS18_PSYCK</name>
<accession>Q1QBZ1</accession>